<comment type="function">
    <text evidence="1">Produces ATP from ADP in the presence of a proton gradient across the membrane. The catalytic sites are hosted primarily by the beta subunits (By similarity).</text>
</comment>
<comment type="catalytic activity">
    <reaction evidence="2">
        <text>ATP + H2O + 4 H(+)(in) = ADP + phosphate + 5 H(+)(out)</text>
        <dbReference type="Rhea" id="RHEA:57720"/>
        <dbReference type="ChEBI" id="CHEBI:15377"/>
        <dbReference type="ChEBI" id="CHEBI:15378"/>
        <dbReference type="ChEBI" id="CHEBI:30616"/>
        <dbReference type="ChEBI" id="CHEBI:43474"/>
        <dbReference type="ChEBI" id="CHEBI:456216"/>
        <dbReference type="EC" id="7.1.2.2"/>
    </reaction>
</comment>
<comment type="subunit">
    <text evidence="1">F-type ATPases have 2 components, CF(1) - the catalytic core - and CF(0) - the membrane proton channel. CF(1) has five subunits: alpha(3), beta(3), gamma(1), delta(1), epsilon(1). CF(0) has four main subunits: a(1), b(1), b'(1) and c(9-12) (By similarity).</text>
</comment>
<comment type="subcellular location">
    <subcellularLocation>
        <location evidence="1">Plastid</location>
        <location evidence="1">Chloroplast thylakoid membrane</location>
        <topology evidence="1">Peripheral membrane protein</topology>
    </subcellularLocation>
</comment>
<comment type="similarity">
    <text evidence="3">Belongs to the ATPase alpha/beta chains family.</text>
</comment>
<geneLocation type="chloroplast"/>
<reference key="1">
    <citation type="journal article" date="1997" name="Am. J. Bot.">
        <title>Evaluation of atpB nucleotide sequences for phylogenetic studies of ferns and other pteridophytes.</title>
        <authorList>
            <person name="Wolf P.G."/>
        </authorList>
    </citation>
    <scope>NUCLEOTIDE SEQUENCE [GENOMIC DNA]</scope>
</reference>
<name>ATPB_HYPHO</name>
<gene>
    <name type="primary">atpB</name>
</gene>
<feature type="chain" id="PRO_0000144518" description="ATP synthase subunit beta, chloroplastic">
    <location>
        <begin position="1" status="less than"/>
        <end position="208" status="greater than"/>
    </location>
</feature>
<feature type="non-terminal residue">
    <location>
        <position position="1"/>
    </location>
</feature>
<feature type="non-terminal residue">
    <location>
        <position position="208"/>
    </location>
</feature>
<organism>
    <name type="scientific">Hypolepis hostilis</name>
    <name type="common">Fern</name>
    <name type="synonym">Cheilanthes hostilis</name>
    <dbReference type="NCBI Taxonomy" id="58521"/>
    <lineage>
        <taxon>Eukaryota</taxon>
        <taxon>Viridiplantae</taxon>
        <taxon>Streptophyta</taxon>
        <taxon>Embryophyta</taxon>
        <taxon>Tracheophyta</taxon>
        <taxon>Polypodiopsida</taxon>
        <taxon>Polypodiidae</taxon>
        <taxon>Polypodiales</taxon>
        <taxon>Dennstaedtiineae</taxon>
        <taxon>Dennstaedtiaceae</taxon>
        <taxon>Hypolepis</taxon>
    </lineage>
</organism>
<dbReference type="EC" id="7.1.2.2"/>
<dbReference type="EMBL" id="U93837">
    <property type="protein sequence ID" value="AAB51745.1"/>
    <property type="molecule type" value="Genomic_DNA"/>
</dbReference>
<dbReference type="GO" id="GO:0009535">
    <property type="term" value="C:chloroplast thylakoid membrane"/>
    <property type="evidence" value="ECO:0007669"/>
    <property type="project" value="UniProtKB-SubCell"/>
</dbReference>
<dbReference type="GO" id="GO:0005739">
    <property type="term" value="C:mitochondrion"/>
    <property type="evidence" value="ECO:0007669"/>
    <property type="project" value="GOC"/>
</dbReference>
<dbReference type="GO" id="GO:0045259">
    <property type="term" value="C:proton-transporting ATP synthase complex"/>
    <property type="evidence" value="ECO:0007669"/>
    <property type="project" value="UniProtKB-KW"/>
</dbReference>
<dbReference type="GO" id="GO:0005524">
    <property type="term" value="F:ATP binding"/>
    <property type="evidence" value="ECO:0007669"/>
    <property type="project" value="UniProtKB-KW"/>
</dbReference>
<dbReference type="GO" id="GO:0046933">
    <property type="term" value="F:proton-transporting ATP synthase activity, rotational mechanism"/>
    <property type="evidence" value="ECO:0007669"/>
    <property type="project" value="TreeGrafter"/>
</dbReference>
<dbReference type="GO" id="GO:0042776">
    <property type="term" value="P:proton motive force-driven mitochondrial ATP synthesis"/>
    <property type="evidence" value="ECO:0007669"/>
    <property type="project" value="TreeGrafter"/>
</dbReference>
<dbReference type="CDD" id="cd18110">
    <property type="entry name" value="ATP-synt_F1_beta_C"/>
    <property type="match status" value="1"/>
</dbReference>
<dbReference type="FunFam" id="1.10.1140.10:FF:000005">
    <property type="entry name" value="ATP synthase subunit beta"/>
    <property type="match status" value="1"/>
</dbReference>
<dbReference type="Gene3D" id="1.10.1140.10">
    <property type="entry name" value="Bovine Mitochondrial F1-atpase, Atp Synthase Beta Chain, Chain D, domain 3"/>
    <property type="match status" value="1"/>
</dbReference>
<dbReference type="Gene3D" id="3.40.50.300">
    <property type="entry name" value="P-loop containing nucleotide triphosphate hydrolases"/>
    <property type="match status" value="1"/>
</dbReference>
<dbReference type="InterPro" id="IPR055190">
    <property type="entry name" value="ATP-synt_VA_C"/>
</dbReference>
<dbReference type="InterPro" id="IPR020003">
    <property type="entry name" value="ATPase_a/bsu_AS"/>
</dbReference>
<dbReference type="InterPro" id="IPR050053">
    <property type="entry name" value="ATPase_alpha/beta_chains"/>
</dbReference>
<dbReference type="InterPro" id="IPR000194">
    <property type="entry name" value="ATPase_F1/V1/A1_a/bsu_nucl-bd"/>
</dbReference>
<dbReference type="InterPro" id="IPR024034">
    <property type="entry name" value="ATPase_F1/V1_b/a_C"/>
</dbReference>
<dbReference type="InterPro" id="IPR027417">
    <property type="entry name" value="P-loop_NTPase"/>
</dbReference>
<dbReference type="PANTHER" id="PTHR15184">
    <property type="entry name" value="ATP SYNTHASE"/>
    <property type="match status" value="1"/>
</dbReference>
<dbReference type="PANTHER" id="PTHR15184:SF71">
    <property type="entry name" value="ATP SYNTHASE SUBUNIT BETA, MITOCHONDRIAL"/>
    <property type="match status" value="1"/>
</dbReference>
<dbReference type="Pfam" id="PF00006">
    <property type="entry name" value="ATP-synt_ab"/>
    <property type="match status" value="1"/>
</dbReference>
<dbReference type="Pfam" id="PF22919">
    <property type="entry name" value="ATP-synt_VA_C"/>
    <property type="match status" value="1"/>
</dbReference>
<dbReference type="SUPFAM" id="SSF47917">
    <property type="entry name" value="C-terminal domain of alpha and beta subunits of F1 ATP synthase"/>
    <property type="match status" value="1"/>
</dbReference>
<dbReference type="SUPFAM" id="SSF52540">
    <property type="entry name" value="P-loop containing nucleoside triphosphate hydrolases"/>
    <property type="match status" value="1"/>
</dbReference>
<dbReference type="PROSITE" id="PS00152">
    <property type="entry name" value="ATPASE_ALPHA_BETA"/>
    <property type="match status" value="1"/>
</dbReference>
<proteinExistence type="inferred from homology"/>
<protein>
    <recommendedName>
        <fullName>ATP synthase subunit beta, chloroplastic</fullName>
        <ecNumber>7.1.2.2</ecNumber>
    </recommendedName>
    <alternativeName>
        <fullName>ATP synthase F1 sector subunit beta</fullName>
    </alternativeName>
    <alternativeName>
        <fullName>F-ATPase subunit beta</fullName>
    </alternativeName>
</protein>
<accession>O03070</accession>
<sequence>KPDVLPFIDNLLRFVQAGSEVSALLGRMPSAVGYQPTLGTEMGSSQERITSTKDGSITSIQAVYVPADDPTDPAPATTSAHLDATTVLSRGLAAKGIYPAVDPLDSTSTMSQPWIVGEEHYETAQGVKQTLQRYKELQDIIAILGLDELSEEDRLTVARARKIERFLSQPSFVAEVFTGSPGKYVSLPETIKGFQMILPGXLDNLPEQ</sequence>
<evidence type="ECO:0000250" key="1"/>
<evidence type="ECO:0000255" key="2">
    <source>
        <dbReference type="PROSITE-ProRule" id="PRU10106"/>
    </source>
</evidence>
<evidence type="ECO:0000305" key="3"/>
<keyword id="KW-0066">ATP synthesis</keyword>
<keyword id="KW-0067">ATP-binding</keyword>
<keyword id="KW-0139">CF(1)</keyword>
<keyword id="KW-0150">Chloroplast</keyword>
<keyword id="KW-0375">Hydrogen ion transport</keyword>
<keyword id="KW-0406">Ion transport</keyword>
<keyword id="KW-0472">Membrane</keyword>
<keyword id="KW-0547">Nucleotide-binding</keyword>
<keyword id="KW-0934">Plastid</keyword>
<keyword id="KW-0793">Thylakoid</keyword>
<keyword id="KW-1278">Translocase</keyword>
<keyword id="KW-0813">Transport</keyword>